<name>KATG_SHEB5</name>
<sequence length="721" mass="79520">MSENKCPMHHSAGGTTNRDWWPKQLRLDILHQHSSLSNPMGDDFNYAEAFKSLDLAAVKQDLLALMTDSQDWWPADFGHYGPLFIRMAWHSAGTYRTGDGRGGAGSGNQRFAPLNSWPDNVSLDKARRLIWPIKQKYGNKISWADLIILTGNVALESMGFKTLGFAGGRVDIWEPEADIYWGAEDKWLDDKRYSGERDLEDPLAAVQMGLIYVNPEGPNGDPDPFAAAVDIRETFARMAMNDEETVALIAGGHTFGKTHGAGDAALVGPEPEAASIEQQGLGWKSSYKSGKGGDAISSGLEVTWTSTPTQWSNNFFENLFGYEWELTKSPAGAHQWIPKNGAGKGVIPDAHDASKRHVPAMLTTDLALIFDPDYEKISRRLFENPDEFAEIFAKAWYKLTHRDMGPCTRYLGPEVPAEEFLWQDPIPAVDHPLVDEQDVTDLKLKIIGSGLTISEVVSTAWASASTYRGSDMRGGANGARIRLAPQKDWPVNQPEQLAKVLKVLESIQSEFNKSGKKISLADLIVLAGCVGIDQAARNAGVEVTIPFTPGRMDATQAQTDVESFAVLEPVADGFRNYHPTQFSVSAEELLVDRAQLLTLTAPEMTVLIGGLRVLDTNADQSKTGVLTARPEFLTNDFFVNLLDMGTTWKPTSKAEDRFEGVDRVSGQPKWTASRVDLIFGSNSQLRALAEVYASSDAQLRFIDDFIAAWTKVMNLDRFDLR</sequence>
<gene>
    <name evidence="1" type="primary">katG</name>
    <name type="ordered locus">Sbal_0875</name>
</gene>
<comment type="function">
    <text evidence="1">Bifunctional enzyme with both catalase and broad-spectrum peroxidase activity.</text>
</comment>
<comment type="catalytic activity">
    <reaction evidence="1">
        <text>H2O2 + AH2 = A + 2 H2O</text>
        <dbReference type="Rhea" id="RHEA:30275"/>
        <dbReference type="ChEBI" id="CHEBI:13193"/>
        <dbReference type="ChEBI" id="CHEBI:15377"/>
        <dbReference type="ChEBI" id="CHEBI:16240"/>
        <dbReference type="ChEBI" id="CHEBI:17499"/>
        <dbReference type="EC" id="1.11.1.21"/>
    </reaction>
</comment>
<comment type="catalytic activity">
    <reaction evidence="1">
        <text>2 H2O2 = O2 + 2 H2O</text>
        <dbReference type="Rhea" id="RHEA:20309"/>
        <dbReference type="ChEBI" id="CHEBI:15377"/>
        <dbReference type="ChEBI" id="CHEBI:15379"/>
        <dbReference type="ChEBI" id="CHEBI:16240"/>
        <dbReference type="EC" id="1.11.1.21"/>
    </reaction>
</comment>
<comment type="cofactor">
    <cofactor evidence="1">
        <name>heme b</name>
        <dbReference type="ChEBI" id="CHEBI:60344"/>
    </cofactor>
    <text evidence="1">Binds 1 heme b (iron(II)-protoporphyrin IX) group per dimer.</text>
</comment>
<comment type="subunit">
    <text evidence="1">Homodimer or homotetramer.</text>
</comment>
<comment type="PTM">
    <text evidence="1">Formation of the three residue Trp-Tyr-Met cross-link is important for the catalase, but not the peroxidase activity of the enzyme.</text>
</comment>
<comment type="similarity">
    <text evidence="1">Belongs to the peroxidase family. Peroxidase/catalase subfamily.</text>
</comment>
<reference key="1">
    <citation type="submission" date="2007-02" db="EMBL/GenBank/DDBJ databases">
        <title>Complete sequence of chromosome of Shewanella baltica OS155.</title>
        <authorList>
            <consortium name="US DOE Joint Genome Institute"/>
            <person name="Copeland A."/>
            <person name="Lucas S."/>
            <person name="Lapidus A."/>
            <person name="Barry K."/>
            <person name="Detter J.C."/>
            <person name="Glavina del Rio T."/>
            <person name="Hammon N."/>
            <person name="Israni S."/>
            <person name="Dalin E."/>
            <person name="Tice H."/>
            <person name="Pitluck S."/>
            <person name="Sims D.R."/>
            <person name="Brettin T."/>
            <person name="Bruce D."/>
            <person name="Han C."/>
            <person name="Tapia R."/>
            <person name="Brainard J."/>
            <person name="Schmutz J."/>
            <person name="Larimer F."/>
            <person name="Land M."/>
            <person name="Hauser L."/>
            <person name="Kyrpides N."/>
            <person name="Mikhailova N."/>
            <person name="Brettar I."/>
            <person name="Klappenbach J."/>
            <person name="Konstantinidis K."/>
            <person name="Rodrigues J."/>
            <person name="Tiedje J."/>
            <person name="Richardson P."/>
        </authorList>
    </citation>
    <scope>NUCLEOTIDE SEQUENCE [LARGE SCALE GENOMIC DNA]</scope>
    <source>
        <strain>OS155 / ATCC BAA-1091</strain>
    </source>
</reference>
<feature type="chain" id="PRO_0000354914" description="Catalase-peroxidase">
    <location>
        <begin position="1"/>
        <end position="721"/>
    </location>
</feature>
<feature type="active site" description="Proton acceptor" evidence="1">
    <location>
        <position position="90"/>
    </location>
</feature>
<feature type="binding site" description="axial binding residue" evidence="1">
    <location>
        <position position="253"/>
    </location>
    <ligand>
        <name>heme b</name>
        <dbReference type="ChEBI" id="CHEBI:60344"/>
    </ligand>
    <ligandPart>
        <name>Fe</name>
        <dbReference type="ChEBI" id="CHEBI:18248"/>
    </ligandPart>
</feature>
<feature type="site" description="Transition state stabilizer" evidence="1">
    <location>
        <position position="86"/>
    </location>
</feature>
<feature type="cross-link" description="Tryptophyl-tyrosyl-methioninium (Trp-Tyr) (with M-238)" evidence="1">
    <location>
        <begin position="89"/>
        <end position="212"/>
    </location>
</feature>
<feature type="cross-link" description="Tryptophyl-tyrosyl-methioninium (Tyr-Met) (with W-89)" evidence="1">
    <location>
        <begin position="212"/>
        <end position="238"/>
    </location>
</feature>
<evidence type="ECO:0000255" key="1">
    <source>
        <dbReference type="HAMAP-Rule" id="MF_01961"/>
    </source>
</evidence>
<protein>
    <recommendedName>
        <fullName evidence="1">Catalase-peroxidase</fullName>
        <shortName evidence="1">CP</shortName>
        <ecNumber evidence="1">1.11.1.21</ecNumber>
    </recommendedName>
    <alternativeName>
        <fullName evidence="1">Peroxidase/catalase</fullName>
    </alternativeName>
</protein>
<proteinExistence type="inferred from homology"/>
<organism>
    <name type="scientific">Shewanella baltica (strain OS155 / ATCC BAA-1091)</name>
    <dbReference type="NCBI Taxonomy" id="325240"/>
    <lineage>
        <taxon>Bacteria</taxon>
        <taxon>Pseudomonadati</taxon>
        <taxon>Pseudomonadota</taxon>
        <taxon>Gammaproteobacteria</taxon>
        <taxon>Alteromonadales</taxon>
        <taxon>Shewanellaceae</taxon>
        <taxon>Shewanella</taxon>
    </lineage>
</organism>
<dbReference type="EC" id="1.11.1.21" evidence="1"/>
<dbReference type="EMBL" id="CP000563">
    <property type="protein sequence ID" value="ABN60400.1"/>
    <property type="molecule type" value="Genomic_DNA"/>
</dbReference>
<dbReference type="RefSeq" id="WP_011845956.1">
    <property type="nucleotide sequence ID" value="NC_009052.1"/>
</dbReference>
<dbReference type="SMR" id="A3D0Y7"/>
<dbReference type="STRING" id="325240.Sbal_0875"/>
<dbReference type="PeroxiBase" id="2336">
    <property type="entry name" value="SbalCP01_OS155"/>
</dbReference>
<dbReference type="KEGG" id="sbl:Sbal_0875"/>
<dbReference type="HOGENOM" id="CLU_025424_2_0_6"/>
<dbReference type="OrthoDB" id="9759743at2"/>
<dbReference type="Proteomes" id="UP000001557">
    <property type="component" value="Chromosome"/>
</dbReference>
<dbReference type="GO" id="GO:0005829">
    <property type="term" value="C:cytosol"/>
    <property type="evidence" value="ECO:0007669"/>
    <property type="project" value="TreeGrafter"/>
</dbReference>
<dbReference type="GO" id="GO:0004096">
    <property type="term" value="F:catalase activity"/>
    <property type="evidence" value="ECO:0007669"/>
    <property type="project" value="UniProtKB-UniRule"/>
</dbReference>
<dbReference type="GO" id="GO:0020037">
    <property type="term" value="F:heme binding"/>
    <property type="evidence" value="ECO:0007669"/>
    <property type="project" value="InterPro"/>
</dbReference>
<dbReference type="GO" id="GO:0046872">
    <property type="term" value="F:metal ion binding"/>
    <property type="evidence" value="ECO:0007669"/>
    <property type="project" value="UniProtKB-KW"/>
</dbReference>
<dbReference type="GO" id="GO:0070301">
    <property type="term" value="P:cellular response to hydrogen peroxide"/>
    <property type="evidence" value="ECO:0007669"/>
    <property type="project" value="TreeGrafter"/>
</dbReference>
<dbReference type="GO" id="GO:0042744">
    <property type="term" value="P:hydrogen peroxide catabolic process"/>
    <property type="evidence" value="ECO:0007669"/>
    <property type="project" value="UniProtKB-KW"/>
</dbReference>
<dbReference type="CDD" id="cd00649">
    <property type="entry name" value="catalase_peroxidase_1"/>
    <property type="match status" value="1"/>
</dbReference>
<dbReference type="CDD" id="cd08200">
    <property type="entry name" value="catalase_peroxidase_2"/>
    <property type="match status" value="1"/>
</dbReference>
<dbReference type="FunFam" id="1.10.420.10:FF:000002">
    <property type="entry name" value="Catalase-peroxidase"/>
    <property type="match status" value="1"/>
</dbReference>
<dbReference type="FunFam" id="1.10.420.10:FF:000004">
    <property type="entry name" value="Catalase-peroxidase"/>
    <property type="match status" value="1"/>
</dbReference>
<dbReference type="FunFam" id="1.10.520.10:FF:000002">
    <property type="entry name" value="Catalase-peroxidase"/>
    <property type="match status" value="1"/>
</dbReference>
<dbReference type="Gene3D" id="1.10.520.10">
    <property type="match status" value="2"/>
</dbReference>
<dbReference type="Gene3D" id="1.10.420.10">
    <property type="entry name" value="Peroxidase, domain 2"/>
    <property type="match status" value="2"/>
</dbReference>
<dbReference type="HAMAP" id="MF_01961">
    <property type="entry name" value="Catal_peroxid"/>
    <property type="match status" value="1"/>
</dbReference>
<dbReference type="InterPro" id="IPR000763">
    <property type="entry name" value="Catalase_peroxidase"/>
</dbReference>
<dbReference type="InterPro" id="IPR002016">
    <property type="entry name" value="Haem_peroxidase"/>
</dbReference>
<dbReference type="InterPro" id="IPR010255">
    <property type="entry name" value="Haem_peroxidase_sf"/>
</dbReference>
<dbReference type="InterPro" id="IPR019794">
    <property type="entry name" value="Peroxidases_AS"/>
</dbReference>
<dbReference type="InterPro" id="IPR019793">
    <property type="entry name" value="Peroxidases_heam-ligand_BS"/>
</dbReference>
<dbReference type="NCBIfam" id="TIGR00198">
    <property type="entry name" value="cat_per_HPI"/>
    <property type="match status" value="1"/>
</dbReference>
<dbReference type="NCBIfam" id="NF011635">
    <property type="entry name" value="PRK15061.1"/>
    <property type="match status" value="1"/>
</dbReference>
<dbReference type="PANTHER" id="PTHR30555:SF0">
    <property type="entry name" value="CATALASE-PEROXIDASE"/>
    <property type="match status" value="1"/>
</dbReference>
<dbReference type="PANTHER" id="PTHR30555">
    <property type="entry name" value="HYDROPEROXIDASE I, BIFUNCTIONAL CATALASE-PEROXIDASE"/>
    <property type="match status" value="1"/>
</dbReference>
<dbReference type="Pfam" id="PF00141">
    <property type="entry name" value="peroxidase"/>
    <property type="match status" value="2"/>
</dbReference>
<dbReference type="PRINTS" id="PR00460">
    <property type="entry name" value="BPEROXIDASE"/>
</dbReference>
<dbReference type="PRINTS" id="PR00458">
    <property type="entry name" value="PEROXIDASE"/>
</dbReference>
<dbReference type="SUPFAM" id="SSF48113">
    <property type="entry name" value="Heme-dependent peroxidases"/>
    <property type="match status" value="2"/>
</dbReference>
<dbReference type="PROSITE" id="PS00435">
    <property type="entry name" value="PEROXIDASE_1"/>
    <property type="match status" value="1"/>
</dbReference>
<dbReference type="PROSITE" id="PS00436">
    <property type="entry name" value="PEROXIDASE_2"/>
    <property type="match status" value="1"/>
</dbReference>
<dbReference type="PROSITE" id="PS50873">
    <property type="entry name" value="PEROXIDASE_4"/>
    <property type="match status" value="1"/>
</dbReference>
<accession>A3D0Y7</accession>
<keyword id="KW-0349">Heme</keyword>
<keyword id="KW-0376">Hydrogen peroxide</keyword>
<keyword id="KW-0408">Iron</keyword>
<keyword id="KW-0479">Metal-binding</keyword>
<keyword id="KW-0560">Oxidoreductase</keyword>
<keyword id="KW-0575">Peroxidase</keyword>
<keyword id="KW-1185">Reference proteome</keyword>